<comment type="subcellular location">
    <subcellularLocation>
        <location evidence="1">Cytoplasm</location>
    </subcellularLocation>
</comment>
<sequence>MTTKITGLVKWFNPEKGFGFITPKDGSKDVFVHFSAIQSNEFRTLNENQEVEFSAEQGPKGPSAVNVVAL</sequence>
<evidence type="ECO:0000250" key="1"/>
<dbReference type="EMBL" id="AL513382">
    <property type="protein sequence ID" value="CAD05743.1"/>
    <property type="molecule type" value="Genomic_DNA"/>
</dbReference>
<dbReference type="EMBL" id="AE014613">
    <property type="protein sequence ID" value="AAO68561.1"/>
    <property type="molecule type" value="Genomic_DNA"/>
</dbReference>
<dbReference type="RefSeq" id="NP_456555.1">
    <property type="nucleotide sequence ID" value="NC_003198.1"/>
</dbReference>
<dbReference type="RefSeq" id="WP_000208507.1">
    <property type="nucleotide sequence ID" value="NZ_WSUR01000042.1"/>
</dbReference>
<dbReference type="SMR" id="P58726"/>
<dbReference type="STRING" id="220341.gene:17586112"/>
<dbReference type="KEGG" id="stt:t0882"/>
<dbReference type="KEGG" id="sty:STY2204"/>
<dbReference type="PATRIC" id="fig|220341.7.peg.2221"/>
<dbReference type="eggNOG" id="COG1278">
    <property type="taxonomic scope" value="Bacteria"/>
</dbReference>
<dbReference type="HOGENOM" id="CLU_117621_0_3_6"/>
<dbReference type="OMA" id="DGQKVQF"/>
<dbReference type="OrthoDB" id="9810590at2"/>
<dbReference type="Proteomes" id="UP000000541">
    <property type="component" value="Chromosome"/>
</dbReference>
<dbReference type="Proteomes" id="UP000002670">
    <property type="component" value="Chromosome"/>
</dbReference>
<dbReference type="GO" id="GO:0005829">
    <property type="term" value="C:cytosol"/>
    <property type="evidence" value="ECO:0007669"/>
    <property type="project" value="UniProtKB-ARBA"/>
</dbReference>
<dbReference type="GO" id="GO:0003677">
    <property type="term" value="F:DNA binding"/>
    <property type="evidence" value="ECO:0007669"/>
    <property type="project" value="UniProtKB-KW"/>
</dbReference>
<dbReference type="CDD" id="cd04458">
    <property type="entry name" value="CSP_CDS"/>
    <property type="match status" value="1"/>
</dbReference>
<dbReference type="FunFam" id="2.40.50.140:FF:000006">
    <property type="entry name" value="Cold shock protein CspC"/>
    <property type="match status" value="1"/>
</dbReference>
<dbReference type="Gene3D" id="2.40.50.140">
    <property type="entry name" value="Nucleic acid-binding proteins"/>
    <property type="match status" value="1"/>
</dbReference>
<dbReference type="InterPro" id="IPR012156">
    <property type="entry name" value="Cold_shock_CspA"/>
</dbReference>
<dbReference type="InterPro" id="IPR050181">
    <property type="entry name" value="Cold_shock_domain"/>
</dbReference>
<dbReference type="InterPro" id="IPR011129">
    <property type="entry name" value="CSD"/>
</dbReference>
<dbReference type="InterPro" id="IPR019844">
    <property type="entry name" value="CSD_CS"/>
</dbReference>
<dbReference type="InterPro" id="IPR002059">
    <property type="entry name" value="CSP_DNA-bd"/>
</dbReference>
<dbReference type="InterPro" id="IPR012340">
    <property type="entry name" value="NA-bd_OB-fold"/>
</dbReference>
<dbReference type="PANTHER" id="PTHR11544">
    <property type="entry name" value="COLD SHOCK DOMAIN CONTAINING PROTEINS"/>
    <property type="match status" value="1"/>
</dbReference>
<dbReference type="Pfam" id="PF00313">
    <property type="entry name" value="CSD"/>
    <property type="match status" value="1"/>
</dbReference>
<dbReference type="PIRSF" id="PIRSF002599">
    <property type="entry name" value="Cold_shock_A"/>
    <property type="match status" value="1"/>
</dbReference>
<dbReference type="PRINTS" id="PR00050">
    <property type="entry name" value="COLDSHOCK"/>
</dbReference>
<dbReference type="SMART" id="SM00357">
    <property type="entry name" value="CSP"/>
    <property type="match status" value="1"/>
</dbReference>
<dbReference type="SUPFAM" id="SSF50249">
    <property type="entry name" value="Nucleic acid-binding proteins"/>
    <property type="match status" value="1"/>
</dbReference>
<dbReference type="PROSITE" id="PS00352">
    <property type="entry name" value="CSD_1"/>
    <property type="match status" value="1"/>
</dbReference>
<dbReference type="PROSITE" id="PS51857">
    <property type="entry name" value="CSD_2"/>
    <property type="match status" value="1"/>
</dbReference>
<name>CSPJ_SALTI</name>
<accession>P58726</accession>
<gene>
    <name type="primary">cspJ</name>
    <name type="synonym">cspB</name>
    <name type="ordered locus">STY2204</name>
    <name type="ordered locus">t0882</name>
</gene>
<keyword id="KW-0010">Activator</keyword>
<keyword id="KW-0963">Cytoplasm</keyword>
<keyword id="KW-0238">DNA-binding</keyword>
<keyword id="KW-0804">Transcription</keyword>
<keyword id="KW-0805">Transcription regulation</keyword>
<organism>
    <name type="scientific">Salmonella typhi</name>
    <dbReference type="NCBI Taxonomy" id="90370"/>
    <lineage>
        <taxon>Bacteria</taxon>
        <taxon>Pseudomonadati</taxon>
        <taxon>Pseudomonadota</taxon>
        <taxon>Gammaproteobacteria</taxon>
        <taxon>Enterobacterales</taxon>
        <taxon>Enterobacteriaceae</taxon>
        <taxon>Salmonella</taxon>
    </lineage>
</organism>
<reference key="1">
    <citation type="journal article" date="2001" name="Nature">
        <title>Complete genome sequence of a multiple drug resistant Salmonella enterica serovar Typhi CT18.</title>
        <authorList>
            <person name="Parkhill J."/>
            <person name="Dougan G."/>
            <person name="James K.D."/>
            <person name="Thomson N.R."/>
            <person name="Pickard D."/>
            <person name="Wain J."/>
            <person name="Churcher C.M."/>
            <person name="Mungall K.L."/>
            <person name="Bentley S.D."/>
            <person name="Holden M.T.G."/>
            <person name="Sebaihia M."/>
            <person name="Baker S."/>
            <person name="Basham D."/>
            <person name="Brooks K."/>
            <person name="Chillingworth T."/>
            <person name="Connerton P."/>
            <person name="Cronin A."/>
            <person name="Davis P."/>
            <person name="Davies R.M."/>
            <person name="Dowd L."/>
            <person name="White N."/>
            <person name="Farrar J."/>
            <person name="Feltwell T."/>
            <person name="Hamlin N."/>
            <person name="Haque A."/>
            <person name="Hien T.T."/>
            <person name="Holroyd S."/>
            <person name="Jagels K."/>
            <person name="Krogh A."/>
            <person name="Larsen T.S."/>
            <person name="Leather S."/>
            <person name="Moule S."/>
            <person name="O'Gaora P."/>
            <person name="Parry C."/>
            <person name="Quail M.A."/>
            <person name="Rutherford K.M."/>
            <person name="Simmonds M."/>
            <person name="Skelton J."/>
            <person name="Stevens K."/>
            <person name="Whitehead S."/>
            <person name="Barrell B.G."/>
        </authorList>
    </citation>
    <scope>NUCLEOTIDE SEQUENCE [LARGE SCALE GENOMIC DNA]</scope>
    <source>
        <strain>CT18</strain>
    </source>
</reference>
<reference key="2">
    <citation type="journal article" date="2003" name="J. Bacteriol.">
        <title>Comparative genomics of Salmonella enterica serovar Typhi strains Ty2 and CT18.</title>
        <authorList>
            <person name="Deng W."/>
            <person name="Liou S.-R."/>
            <person name="Plunkett G. III"/>
            <person name="Mayhew G.F."/>
            <person name="Rose D.J."/>
            <person name="Burland V."/>
            <person name="Kodoyianni V."/>
            <person name="Schwartz D.C."/>
            <person name="Blattner F.R."/>
        </authorList>
    </citation>
    <scope>NUCLEOTIDE SEQUENCE [LARGE SCALE GENOMIC DNA]</scope>
    <source>
        <strain>ATCC 700931 / Ty2</strain>
    </source>
</reference>
<feature type="chain" id="PRO_0000100274" description="Cold shock-like protein CspJ">
    <location>
        <begin position="1"/>
        <end position="70"/>
    </location>
</feature>
<feature type="domain" description="CSD">
    <location>
        <begin position="7"/>
        <end position="67"/>
    </location>
</feature>
<protein>
    <recommendedName>
        <fullName>Cold shock-like protein CspJ</fullName>
    </recommendedName>
</protein>
<proteinExistence type="inferred from homology"/>